<protein>
    <recommendedName>
        <fullName>Metallothionein-1</fullName>
    </recommendedName>
    <alternativeName>
        <fullName>CuMT-1</fullName>
    </alternativeName>
</protein>
<name>MT1_HOMAM</name>
<feature type="chain" id="PRO_0000197342" description="Metallothionein-1">
    <location>
        <begin position="1"/>
        <end position="58"/>
    </location>
</feature>
<feature type="region of interest" description="Beta">
    <location>
        <begin position="1"/>
        <end position="28"/>
    </location>
</feature>
<feature type="region of interest" description="Alpha">
    <location>
        <begin position="29"/>
        <end position="58"/>
    </location>
</feature>
<feature type="binding site" evidence="1 4">
    <location>
        <position position="4"/>
    </location>
    <ligand>
        <name>a divalent metal cation</name>
        <dbReference type="ChEBI" id="CHEBI:60240"/>
        <label>1</label>
        <note>in cluster B</note>
    </ligand>
</feature>
<feature type="binding site" evidence="1 4">
    <location>
        <position position="5"/>
    </location>
    <ligand>
        <name>a divalent metal cation</name>
        <dbReference type="ChEBI" id="CHEBI:60240"/>
        <label>1</label>
        <note>in cluster B</note>
    </ligand>
</feature>
<feature type="binding site" evidence="1 4">
    <location>
        <position position="5"/>
    </location>
    <ligand>
        <name>a divalent metal cation</name>
        <dbReference type="ChEBI" id="CHEBI:60240"/>
        <label>2</label>
        <note>in cluster B</note>
    </ligand>
</feature>
<feature type="binding site" evidence="1 4">
    <location>
        <position position="9"/>
    </location>
    <ligand>
        <name>a divalent metal cation</name>
        <dbReference type="ChEBI" id="CHEBI:60240"/>
        <label>2</label>
        <note>in cluster B</note>
    </ligand>
</feature>
<feature type="binding site" evidence="1 4">
    <location>
        <position position="11"/>
    </location>
    <ligand>
        <name>a divalent metal cation</name>
        <dbReference type="ChEBI" id="CHEBI:60240"/>
        <label>3</label>
        <note>in cluster B</note>
    </ligand>
</feature>
<feature type="binding site" evidence="1 4">
    <location>
        <position position="16"/>
    </location>
    <ligand>
        <name>a divalent metal cation</name>
        <dbReference type="ChEBI" id="CHEBI:60240"/>
        <label>1</label>
        <note>in cluster B</note>
    </ligand>
</feature>
<feature type="binding site" evidence="1 4">
    <location>
        <position position="16"/>
    </location>
    <ligand>
        <name>a divalent metal cation</name>
        <dbReference type="ChEBI" id="CHEBI:60240"/>
        <label>3</label>
        <note>in cluster B</note>
    </ligand>
</feature>
<feature type="binding site" evidence="1 4">
    <location>
        <position position="20"/>
    </location>
    <ligand>
        <name>a divalent metal cation</name>
        <dbReference type="ChEBI" id="CHEBI:60240"/>
        <label>1</label>
        <note>in cluster B</note>
    </ligand>
</feature>
<feature type="binding site" evidence="1 4">
    <location>
        <position position="22"/>
    </location>
    <ligand>
        <name>a divalent metal cation</name>
        <dbReference type="ChEBI" id="CHEBI:60240"/>
        <label>2</label>
        <note>in cluster B</note>
    </ligand>
</feature>
<feature type="binding site" evidence="1 4">
    <location>
        <position position="25"/>
    </location>
    <ligand>
        <name>a divalent metal cation</name>
        <dbReference type="ChEBI" id="CHEBI:60240"/>
        <label>2</label>
        <note>in cluster B</note>
    </ligand>
</feature>
<feature type="binding site" evidence="1 4">
    <location>
        <position position="25"/>
    </location>
    <ligand>
        <name>a divalent metal cation</name>
        <dbReference type="ChEBI" id="CHEBI:60240"/>
        <label>3</label>
        <note>in cluster B</note>
    </ligand>
</feature>
<feature type="binding site" evidence="1 4">
    <location>
        <position position="27"/>
    </location>
    <ligand>
        <name>a divalent metal cation</name>
        <dbReference type="ChEBI" id="CHEBI:60240"/>
        <label>3</label>
        <note>in cluster B</note>
    </ligand>
</feature>
<feature type="binding site" evidence="1 3">
    <location>
        <position position="30"/>
    </location>
    <ligand>
        <name>a divalent metal cation</name>
        <dbReference type="ChEBI" id="CHEBI:60240"/>
        <label>4</label>
        <note>in cluster A</note>
    </ligand>
</feature>
<feature type="binding site" evidence="1 3">
    <location>
        <position position="33"/>
    </location>
    <ligand>
        <name>a divalent metal cation</name>
        <dbReference type="ChEBI" id="CHEBI:60240"/>
        <label>4</label>
        <note>in cluster A</note>
    </ligand>
</feature>
<feature type="binding site" evidence="1 3">
    <location>
        <position position="33"/>
    </location>
    <ligand>
        <name>a divalent metal cation</name>
        <dbReference type="ChEBI" id="CHEBI:60240"/>
        <label>5</label>
        <note>in cluster A</note>
    </ligand>
</feature>
<feature type="binding site" evidence="1 3">
    <location>
        <position position="37"/>
    </location>
    <ligand>
        <name>a divalent metal cation</name>
        <dbReference type="ChEBI" id="CHEBI:60240"/>
        <label>5</label>
        <note>in cluster A</note>
    </ligand>
</feature>
<feature type="binding site" evidence="1 3">
    <location>
        <position position="39"/>
    </location>
    <ligand>
        <name>a divalent metal cation</name>
        <dbReference type="ChEBI" id="CHEBI:60240"/>
        <label>6</label>
        <note>in cluster A</note>
    </ligand>
</feature>
<feature type="binding site" evidence="1 3">
    <location>
        <position position="45"/>
    </location>
    <ligand>
        <name>a divalent metal cation</name>
        <dbReference type="ChEBI" id="CHEBI:60240"/>
        <label>6</label>
        <note>in cluster A</note>
    </ligand>
</feature>
<feature type="binding site" evidence="1 3">
    <location>
        <position position="49"/>
    </location>
    <ligand>
        <name>a divalent metal cation</name>
        <dbReference type="ChEBI" id="CHEBI:60240"/>
        <label>4</label>
        <note>in cluster A</note>
    </ligand>
</feature>
<feature type="binding site" evidence="1 3">
    <location>
        <position position="49"/>
    </location>
    <ligand>
        <name>a divalent metal cation</name>
        <dbReference type="ChEBI" id="CHEBI:60240"/>
        <label>6</label>
        <note>in cluster A</note>
    </ligand>
</feature>
<feature type="binding site" evidence="1 3">
    <location>
        <position position="53"/>
    </location>
    <ligand>
        <name>a divalent metal cation</name>
        <dbReference type="ChEBI" id="CHEBI:60240"/>
        <label>4</label>
        <note>in cluster A</note>
    </ligand>
</feature>
<feature type="binding site" evidence="1 3">
    <location>
        <position position="55"/>
    </location>
    <ligand>
        <name>a divalent metal cation</name>
        <dbReference type="ChEBI" id="CHEBI:60240"/>
        <label>5</label>
        <note>in cluster A</note>
    </ligand>
</feature>
<feature type="binding site" evidence="1 3">
    <location>
        <position position="56"/>
    </location>
    <ligand>
        <name>a divalent metal cation</name>
        <dbReference type="ChEBI" id="CHEBI:60240"/>
        <label>5</label>
        <note>in cluster A</note>
    </ligand>
</feature>
<feature type="binding site" evidence="1 3">
    <location>
        <position position="56"/>
    </location>
    <ligand>
        <name>a divalent metal cation</name>
        <dbReference type="ChEBI" id="CHEBI:60240"/>
        <label>6</label>
        <note>in cluster A</note>
    </ligand>
</feature>
<feature type="strand" evidence="6">
    <location>
        <begin position="6"/>
        <end position="8"/>
    </location>
</feature>
<feature type="strand" evidence="6">
    <location>
        <begin position="11"/>
        <end position="14"/>
    </location>
</feature>
<feature type="helix" evidence="5">
    <location>
        <begin position="31"/>
        <end position="33"/>
    </location>
</feature>
<feature type="helix" evidence="5">
    <location>
        <begin position="45"/>
        <end position="48"/>
    </location>
</feature>
<dbReference type="PIR" id="A37039">
    <property type="entry name" value="A37039"/>
</dbReference>
<dbReference type="PDB" id="1J5L">
    <property type="method" value="NMR"/>
    <property type="chains" value="A=29-56"/>
</dbReference>
<dbReference type="PDB" id="1J5M">
    <property type="method" value="NMR"/>
    <property type="chains" value="A=1-28"/>
</dbReference>
<dbReference type="PDBsum" id="1J5L"/>
<dbReference type="PDBsum" id="1J5M"/>
<dbReference type="BMRB" id="P29499"/>
<dbReference type="SMR" id="P29499"/>
<dbReference type="EvolutionaryTrace" id="P29499"/>
<dbReference type="GO" id="GO:0046872">
    <property type="term" value="F:metal ion binding"/>
    <property type="evidence" value="ECO:0007669"/>
    <property type="project" value="UniProtKB-KW"/>
</dbReference>
<dbReference type="InterPro" id="IPR002045">
    <property type="entry name" value="Metalthion_crustacean"/>
</dbReference>
<dbReference type="InterPro" id="IPR017854">
    <property type="entry name" value="Metalthion_dom_sf"/>
</dbReference>
<dbReference type="PRINTS" id="PR00858">
    <property type="entry name" value="MTCRUSTACEAN"/>
</dbReference>
<dbReference type="SUPFAM" id="SSF57868">
    <property type="entry name" value="Metallothionein"/>
    <property type="match status" value="2"/>
</dbReference>
<evidence type="ECO:0000269" key="1">
    <source>
    </source>
</evidence>
<evidence type="ECO:0000305" key="2"/>
<evidence type="ECO:0007744" key="3">
    <source>
        <dbReference type="PDB" id="1J5L"/>
    </source>
</evidence>
<evidence type="ECO:0007744" key="4">
    <source>
        <dbReference type="PDB" id="1J5M"/>
    </source>
</evidence>
<evidence type="ECO:0007829" key="5">
    <source>
        <dbReference type="PDB" id="1J5L"/>
    </source>
</evidence>
<evidence type="ECO:0007829" key="6">
    <source>
        <dbReference type="PDB" id="1J5M"/>
    </source>
</evidence>
<organism>
    <name type="scientific">Homarus americanus</name>
    <name type="common">American lobster</name>
    <dbReference type="NCBI Taxonomy" id="6706"/>
    <lineage>
        <taxon>Eukaryota</taxon>
        <taxon>Metazoa</taxon>
        <taxon>Ecdysozoa</taxon>
        <taxon>Arthropoda</taxon>
        <taxon>Crustacea</taxon>
        <taxon>Multicrustacea</taxon>
        <taxon>Malacostraca</taxon>
        <taxon>Eumalacostraca</taxon>
        <taxon>Eucarida</taxon>
        <taxon>Decapoda</taxon>
        <taxon>Pleocyemata</taxon>
        <taxon>Astacidea</taxon>
        <taxon>Nephropoidea</taxon>
        <taxon>Nephropidae</taxon>
        <taxon>Homarus</taxon>
    </lineage>
</organism>
<proteinExistence type="evidence at protein level"/>
<sequence>PGPCCKDKCECAEGGCKTGCKCTSCRCAPCEKCTSGCKCPSKDECAKTCSKPCSCCXX</sequence>
<comment type="function">
    <text>Metallothioneins have a high content of cysteine residues that bind various heavy metals. The different forms of lobster metallothioneins may have different biological functions. Class I MTS in marine crustacea are involved in the sequestration of elevated levels of heavy-metal ions. Binds 6 metal ions. Known to bind cadmium.</text>
</comment>
<comment type="similarity">
    <text evidence="2">Belongs to the metallothionein superfamily. Type 3 family.</text>
</comment>
<keyword id="KW-0002">3D-structure</keyword>
<keyword id="KW-0104">Cadmium</keyword>
<keyword id="KW-0186">Copper</keyword>
<keyword id="KW-0903">Direct protein sequencing</keyword>
<keyword id="KW-0479">Metal-binding</keyword>
<keyword id="KW-0480">Metal-thiolate cluster</keyword>
<accession>P29499</accession>
<reference key="1">
    <citation type="journal article" date="1989" name="J. Inorg. Biochem.">
        <title>Structural and functional diversity of copper-metallothioneins from the American lobster Homarus americanus.</title>
        <authorList>
            <person name="Brouwer M."/>
            <person name="Winge D.R."/>
            <person name="Gray W.R."/>
        </authorList>
    </citation>
    <scope>PROTEIN SEQUENCE</scope>
    <source>
        <tissue>Hepatopancreas</tissue>
    </source>
</reference>
<reference key="2">
    <citation type="journal article" date="1994" name="Biochemistry">
        <title>Sequential proton resonance assignments and metal cluster topology of lobster metallothionein-1.</title>
        <authorList>
            <person name="Zhu Z."/>
            <person name="Derose E.F."/>
            <person name="Mullen G.P."/>
            <person name="Petering D.H."/>
            <person name="Shaw C.F. III"/>
        </authorList>
    </citation>
    <scope>STRUCTURE BY NMR</scope>
</reference>
<reference evidence="3 4" key="3">
    <citation type="journal article" date="2002" name="J. Biol. Inorg. Chem.">
        <title>Structure of the (113)Cd(3)beta domains from Homarus americanus metallothionein-1: hydrogen bonding and solvent accessibility of sulfur atoms.</title>
        <authorList>
            <person name="Munoz A."/>
            <person name="Foersterling F.H."/>
            <person name="Shaw C.F. III"/>
            <person name="Petering D.H."/>
        </authorList>
    </citation>
    <scope>STRUCTURE BY NMR IN COMPLEX WITH CADMIUM IONS</scope>
</reference>